<comment type="function">
    <text evidence="5 6 7">Involved in the maintenance of proper DNA topology and chromosome integrity via annealing of single-stranded DNA breaks. Modulates DNA polymerase delta during replication or replication-associated repair. May function as a modulator for SGS1 when DNA is damaged.</text>
</comment>
<comment type="cofactor">
    <cofactor evidence="6">
        <name>Mg(2+)</name>
        <dbReference type="ChEBI" id="CHEBI:18420"/>
    </cofactor>
</comment>
<comment type="subcellular location">
    <subcellularLocation>
        <location evidence="9">Nucleus</location>
    </subcellularLocation>
</comment>
<comment type="miscellaneous">
    <text evidence="8">Present with 1180 molecules/cell in log phase SD medium.</text>
</comment>
<comment type="similarity">
    <text evidence="9">Belongs to the AAA ATPase family. RarA/MGS1/WRNIP1 subfamily.</text>
</comment>
<gene>
    <name type="primary">MGS1</name>
    <name type="ordered locus">YNL218W</name>
    <name type="ORF">N1302</name>
</gene>
<sequence length="587" mass="66544">MSNKRTSVEQLISCPICSRKVFFSLINSHLDICGKEKSKPSSRPQTVSSLLAGPKKRKQANSEKFIDLENKDHEIKPGLKSESDDIEIVENESKRFKAAPSTDFAKSIVEPASSRDQLHNDYESRWLQKISHLPLSEKLRPKELRDYVGQQHILSQDNGTLFKYIKQGTIPSMILWGPPGVGKTSLARLLTKTATTSSNESNVGSRYFMIETSATKANTQELRGIFEKSKKEYQLTKRRTVLFIDEIHRFNKVQQDLLLPHVENGDIILIGATTENPSFQLNNALISRCLIFVLEKLNVNELCIVLSRGIALLNKCRKQVWNIENPLKLSRSILEYVVDLSVGDTRRALNMLEMIEVSTRERKADEEELSIDDVRDIIKNNSSNGLNTYYDPKGDNHYDTISAFHKSIRGGDENASLYYLARMLQGGEDPLYVARRMIRIASEDIGLRDSSLLPLAVAAHDAVMKVGLPEADLALAQCCVALARAPKSVELYRAWKKLRAMMSENMYSLASSEIPMHIRNAPTKLMEELGYHKGYKYNPDYIEGKVQQDYFPKEVLEKCPNKTDLKFLDGKHLGDKEDPDLRQSYQG</sequence>
<name>WRIP1_YEAST</name>
<protein>
    <recommendedName>
        <fullName>DNA-dependent ATPase MGS1</fullName>
    </recommendedName>
    <alternativeName>
        <fullName>Maintenance of genome stability protein 1</fullName>
    </alternativeName>
</protein>
<proteinExistence type="evidence at protein level"/>
<reference key="1">
    <citation type="journal article" date="1997" name="Nature">
        <title>The nucleotide sequence of Saccharomyces cerevisiae chromosome XIV and its evolutionary implications.</title>
        <authorList>
            <person name="Philippsen P."/>
            <person name="Kleine K."/>
            <person name="Poehlmann R."/>
            <person name="Duesterhoeft A."/>
            <person name="Hamberg K."/>
            <person name="Hegemann J.H."/>
            <person name="Obermaier B."/>
            <person name="Urrestarazu L.A."/>
            <person name="Aert R."/>
            <person name="Albermann K."/>
            <person name="Altmann R."/>
            <person name="Andre B."/>
            <person name="Baladron V."/>
            <person name="Ballesta J.P.G."/>
            <person name="Becam A.-M."/>
            <person name="Beinhauer J.D."/>
            <person name="Boskovic J."/>
            <person name="Buitrago M.J."/>
            <person name="Bussereau F."/>
            <person name="Coster F."/>
            <person name="Crouzet M."/>
            <person name="D'Angelo M."/>
            <person name="Dal Pero F."/>
            <person name="De Antoni A."/>
            <person name="del Rey F."/>
            <person name="Doignon F."/>
            <person name="Domdey H."/>
            <person name="Dubois E."/>
            <person name="Fiedler T.A."/>
            <person name="Fleig U."/>
            <person name="Floeth M."/>
            <person name="Fritz C."/>
            <person name="Gaillardin C."/>
            <person name="Garcia-Cantalejo J.M."/>
            <person name="Glansdorff N."/>
            <person name="Goffeau A."/>
            <person name="Gueldener U."/>
            <person name="Herbert C.J."/>
            <person name="Heumann K."/>
            <person name="Heuss-Neitzel D."/>
            <person name="Hilbert H."/>
            <person name="Hinni K."/>
            <person name="Iraqui Houssaini I."/>
            <person name="Jacquet M."/>
            <person name="Jimenez A."/>
            <person name="Jonniaux J.-L."/>
            <person name="Karpfinger-Hartl L."/>
            <person name="Lanfranchi G."/>
            <person name="Lepingle A."/>
            <person name="Levesque H."/>
            <person name="Lyck R."/>
            <person name="Maftahi M."/>
            <person name="Mallet L."/>
            <person name="Maurer C.T.C."/>
            <person name="Messenguy F."/>
            <person name="Mewes H.-W."/>
            <person name="Moestl D."/>
            <person name="Nasr F."/>
            <person name="Nicaud J.-M."/>
            <person name="Niedenthal R.K."/>
            <person name="Pandolfo D."/>
            <person name="Pierard A."/>
            <person name="Piravandi E."/>
            <person name="Planta R.J."/>
            <person name="Pohl T.M."/>
            <person name="Purnelle B."/>
            <person name="Rebischung C."/>
            <person name="Remacha M.A."/>
            <person name="Revuelta J.L."/>
            <person name="Rinke M."/>
            <person name="Saiz J.E."/>
            <person name="Sartorello F."/>
            <person name="Scherens B."/>
            <person name="Sen-Gupta M."/>
            <person name="Soler-Mira A."/>
            <person name="Urbanus J.H.M."/>
            <person name="Valle G."/>
            <person name="Van Dyck L."/>
            <person name="Verhasselt P."/>
            <person name="Vierendeels F."/>
            <person name="Vissers S."/>
            <person name="Voet M."/>
            <person name="Volckaert G."/>
            <person name="Wach A."/>
            <person name="Wambutt R."/>
            <person name="Wedler H."/>
            <person name="Zollner A."/>
            <person name="Hani J."/>
        </authorList>
    </citation>
    <scope>NUCLEOTIDE SEQUENCE [LARGE SCALE GENOMIC DNA]</scope>
    <source>
        <strain>ATCC 204508 / S288c</strain>
    </source>
</reference>
<reference key="2">
    <citation type="journal article" date="2014" name="G3 (Bethesda)">
        <title>The reference genome sequence of Saccharomyces cerevisiae: Then and now.</title>
        <authorList>
            <person name="Engel S.R."/>
            <person name="Dietrich F.S."/>
            <person name="Fisk D.G."/>
            <person name="Binkley G."/>
            <person name="Balakrishnan R."/>
            <person name="Costanzo M.C."/>
            <person name="Dwight S.S."/>
            <person name="Hitz B.C."/>
            <person name="Karra K."/>
            <person name="Nash R.S."/>
            <person name="Weng S."/>
            <person name="Wong E.D."/>
            <person name="Lloyd P."/>
            <person name="Skrzypek M.S."/>
            <person name="Miyasato S.R."/>
            <person name="Simison M."/>
            <person name="Cherry J.M."/>
        </authorList>
    </citation>
    <scope>GENOME REANNOTATION</scope>
    <source>
        <strain>ATCC 204508 / S288c</strain>
    </source>
</reference>
<reference key="3">
    <citation type="journal article" date="2007" name="Genome Res.">
        <title>Approaching a complete repository of sequence-verified protein-encoding clones for Saccharomyces cerevisiae.</title>
        <authorList>
            <person name="Hu Y."/>
            <person name="Rolfs A."/>
            <person name="Bhullar B."/>
            <person name="Murthy T.V.S."/>
            <person name="Zhu C."/>
            <person name="Berger M.F."/>
            <person name="Camargo A.A."/>
            <person name="Kelley F."/>
            <person name="McCarron S."/>
            <person name="Jepson D."/>
            <person name="Richardson A."/>
            <person name="Raphael J."/>
            <person name="Moreira D."/>
            <person name="Taycher E."/>
            <person name="Zuo D."/>
            <person name="Mohr S."/>
            <person name="Kane M.F."/>
            <person name="Williamson J."/>
            <person name="Simpson A.J.G."/>
            <person name="Bulyk M.L."/>
            <person name="Harlow E."/>
            <person name="Marsischky G."/>
            <person name="Kolodner R.D."/>
            <person name="LaBaer J."/>
        </authorList>
    </citation>
    <scope>NUCLEOTIDE SEQUENCE [GENOMIC DNA]</scope>
    <source>
        <strain>ATCC 204508 / S288c</strain>
    </source>
</reference>
<reference key="4">
    <citation type="journal article" date="1995" name="Yeast">
        <title>The sequence of a 13.5 kb DNA segment from the left arm of yeast chromosome XIV reveals MER1; RAP1; a new putative member of the DNA replication complex and a new putative serine/threonine phosphatase gene.</title>
        <authorList>
            <person name="Coster F."/>
            <person name="van Dyck L."/>
            <person name="Jonniaux J.-L."/>
            <person name="Purnelle B."/>
            <person name="Goffeau A."/>
        </authorList>
    </citation>
    <scope>NUCLEOTIDE SEQUENCE [GENOMIC DNA] OF 116-587</scope>
    <source>
        <strain>ATCC 96604 / S288c / FY1679</strain>
    </source>
</reference>
<reference key="5">
    <citation type="journal article" date="2001" name="J. Biol. Chem.">
        <title>A novel protein interacts with the Werner's syndrome gene product physically and functionally.</title>
        <authorList>
            <person name="Kawabe Y."/>
            <person name="Branzei D."/>
            <person name="Hayashi T."/>
            <person name="Suzuki H."/>
            <person name="Masuko T."/>
            <person name="Onoda F."/>
            <person name="Heo S.-J."/>
            <person name="Ikeda H."/>
            <person name="Shimamoto A."/>
            <person name="Furuichi Y."/>
            <person name="Seki M."/>
            <person name="Enomoto T."/>
        </authorList>
    </citation>
    <scope>FUNCTION</scope>
</reference>
<reference key="6">
    <citation type="journal article" date="2001" name="Proc. Natl. Acad. Sci. U.S.A.">
        <title>A yeast gene, MGS1, encoding a DNA-dependent AAA(+) ATPase is required to maintain genome stability.</title>
        <authorList>
            <person name="Hishida T."/>
            <person name="Iwasaki H."/>
            <person name="Ohno T."/>
            <person name="Morishita T."/>
            <person name="Shinagawa H."/>
        </authorList>
    </citation>
    <scope>FUNCTION</scope>
    <scope>COFACTOR</scope>
</reference>
<reference key="7">
    <citation type="journal article" date="2002" name="Mol. Genet. Genomics">
        <title>The product of Saccharomyces cerevisiae WHIP/MGS1, a gene related to replication factor C genes, interacts functionally with DNA polymerase delta.</title>
        <authorList>
            <person name="Branzei D."/>
            <person name="Seki M."/>
            <person name="Onoda F."/>
            <person name="Enomoto T."/>
        </authorList>
    </citation>
    <scope>FUNCTION</scope>
</reference>
<reference key="8">
    <citation type="journal article" date="2003" name="Nature">
        <title>Global analysis of protein expression in yeast.</title>
        <authorList>
            <person name="Ghaemmaghami S."/>
            <person name="Huh W.-K."/>
            <person name="Bower K."/>
            <person name="Howson R.W."/>
            <person name="Belle A."/>
            <person name="Dephoure N."/>
            <person name="O'Shea E.K."/>
            <person name="Weissman J.S."/>
        </authorList>
    </citation>
    <scope>LEVEL OF PROTEIN EXPRESSION [LARGE SCALE ANALYSIS]</scope>
</reference>
<evidence type="ECO:0000250" key="1">
    <source>
        <dbReference type="UniProtKB" id="P55072"/>
    </source>
</evidence>
<evidence type="ECO:0000255" key="2"/>
<evidence type="ECO:0000255" key="3">
    <source>
        <dbReference type="PROSITE-ProRule" id="PRU01256"/>
    </source>
</evidence>
<evidence type="ECO:0000256" key="4">
    <source>
        <dbReference type="SAM" id="MobiDB-lite"/>
    </source>
</evidence>
<evidence type="ECO:0000269" key="5">
    <source>
    </source>
</evidence>
<evidence type="ECO:0000269" key="6">
    <source>
    </source>
</evidence>
<evidence type="ECO:0000269" key="7">
    <source>
    </source>
</evidence>
<evidence type="ECO:0000269" key="8">
    <source>
    </source>
</evidence>
<evidence type="ECO:0000305" key="9"/>
<feature type="chain" id="PRO_0000084788" description="DNA-dependent ATPase MGS1">
    <location>
        <begin position="1"/>
        <end position="587"/>
    </location>
</feature>
<feature type="zinc finger region" description="UBZ4-type" evidence="3">
    <location>
        <begin position="11"/>
        <end position="38"/>
    </location>
</feature>
<feature type="region of interest" description="Disordered" evidence="4">
    <location>
        <begin position="35"/>
        <end position="62"/>
    </location>
</feature>
<feature type="binding site" evidence="3">
    <location>
        <position position="14"/>
    </location>
    <ligand>
        <name>Zn(2+)</name>
        <dbReference type="ChEBI" id="CHEBI:29105"/>
    </ligand>
</feature>
<feature type="binding site" evidence="3">
    <location>
        <position position="17"/>
    </location>
    <ligand>
        <name>Zn(2+)</name>
        <dbReference type="ChEBI" id="CHEBI:29105"/>
    </ligand>
</feature>
<feature type="binding site" evidence="3">
    <location>
        <position position="29"/>
    </location>
    <ligand>
        <name>Zn(2+)</name>
        <dbReference type="ChEBI" id="CHEBI:29105"/>
    </ligand>
</feature>
<feature type="binding site" evidence="3">
    <location>
        <position position="33"/>
    </location>
    <ligand>
        <name>Zn(2+)</name>
        <dbReference type="ChEBI" id="CHEBI:29105"/>
    </ligand>
</feature>
<feature type="binding site" evidence="2">
    <location>
        <begin position="177"/>
        <end position="184"/>
    </location>
    <ligand>
        <name>ATP</name>
        <dbReference type="ChEBI" id="CHEBI:30616"/>
    </ligand>
</feature>
<feature type="binding site" evidence="1">
    <location>
        <begin position="179"/>
        <end position="185"/>
    </location>
    <ligand>
        <name>ATP</name>
        <dbReference type="ChEBI" id="CHEBI:30616"/>
    </ligand>
</feature>
<dbReference type="EMBL" id="Z71493">
    <property type="protein sequence ID" value="CAA96120.1"/>
    <property type="molecule type" value="Genomic_DNA"/>
</dbReference>
<dbReference type="EMBL" id="Z71494">
    <property type="protein sequence ID" value="CAA96121.1"/>
    <property type="molecule type" value="Genomic_DNA"/>
</dbReference>
<dbReference type="EMBL" id="AY693190">
    <property type="protein sequence ID" value="AAT93209.1"/>
    <property type="molecule type" value="Genomic_DNA"/>
</dbReference>
<dbReference type="EMBL" id="X78898">
    <property type="protein sequence ID" value="CAA55489.1"/>
    <property type="molecule type" value="Genomic_DNA"/>
</dbReference>
<dbReference type="EMBL" id="BK006947">
    <property type="protein sequence ID" value="DAA10338.1"/>
    <property type="molecule type" value="Genomic_DNA"/>
</dbReference>
<dbReference type="PIR" id="S63176">
    <property type="entry name" value="S63176"/>
</dbReference>
<dbReference type="RefSeq" id="NP_014181.1">
    <property type="nucleotide sequence ID" value="NM_001183056.1"/>
</dbReference>
<dbReference type="SMR" id="P40151"/>
<dbReference type="BioGRID" id="35618">
    <property type="interactions" value="87"/>
</dbReference>
<dbReference type="DIP" id="DIP-1638N"/>
<dbReference type="FunCoup" id="P40151">
    <property type="interactions" value="973"/>
</dbReference>
<dbReference type="IntAct" id="P40151">
    <property type="interactions" value="13"/>
</dbReference>
<dbReference type="MINT" id="P40151"/>
<dbReference type="STRING" id="4932.YNL218W"/>
<dbReference type="GlyGen" id="P40151">
    <property type="glycosylation" value="1 site, 1 O-linked glycan (1 site)"/>
</dbReference>
<dbReference type="iPTMnet" id="P40151"/>
<dbReference type="PaxDb" id="4932-YNL218W"/>
<dbReference type="PeptideAtlas" id="P40151"/>
<dbReference type="EnsemblFungi" id="YNL218W_mRNA">
    <property type="protein sequence ID" value="YNL218W"/>
    <property type="gene ID" value="YNL218W"/>
</dbReference>
<dbReference type="GeneID" id="855503"/>
<dbReference type="KEGG" id="sce:YNL218W"/>
<dbReference type="AGR" id="SGD:S000005162"/>
<dbReference type="SGD" id="S000005162">
    <property type="gene designation" value="MGS1"/>
</dbReference>
<dbReference type="VEuPathDB" id="FungiDB:YNL218W"/>
<dbReference type="eggNOG" id="KOG2028">
    <property type="taxonomic scope" value="Eukaryota"/>
</dbReference>
<dbReference type="GeneTree" id="ENSGT00390000008538"/>
<dbReference type="HOGENOM" id="CLU_017985_0_1_1"/>
<dbReference type="InParanoid" id="P40151"/>
<dbReference type="OMA" id="RIILSQC"/>
<dbReference type="OrthoDB" id="10265467at2759"/>
<dbReference type="BioCyc" id="YEAST:G3O-33224-MONOMER"/>
<dbReference type="BioGRID-ORCS" id="855503">
    <property type="hits" value="1 hit in 10 CRISPR screens"/>
</dbReference>
<dbReference type="PRO" id="PR:P40151"/>
<dbReference type="Proteomes" id="UP000002311">
    <property type="component" value="Chromosome XIV"/>
</dbReference>
<dbReference type="RNAct" id="P40151">
    <property type="molecule type" value="protein"/>
</dbReference>
<dbReference type="GO" id="GO:0005737">
    <property type="term" value="C:cytoplasm"/>
    <property type="evidence" value="ECO:0007005"/>
    <property type="project" value="SGD"/>
</dbReference>
<dbReference type="GO" id="GO:0005634">
    <property type="term" value="C:nucleus"/>
    <property type="evidence" value="ECO:0007005"/>
    <property type="project" value="SGD"/>
</dbReference>
<dbReference type="GO" id="GO:0005524">
    <property type="term" value="F:ATP binding"/>
    <property type="evidence" value="ECO:0007669"/>
    <property type="project" value="UniProtKB-KW"/>
</dbReference>
<dbReference type="GO" id="GO:0016887">
    <property type="term" value="F:ATP hydrolysis activity"/>
    <property type="evidence" value="ECO:0007669"/>
    <property type="project" value="InterPro"/>
</dbReference>
<dbReference type="GO" id="GO:0008047">
    <property type="term" value="F:enzyme activator activity"/>
    <property type="evidence" value="ECO:0000314"/>
    <property type="project" value="SGD"/>
</dbReference>
<dbReference type="GO" id="GO:0051880">
    <property type="term" value="F:G-quadruplex DNA binding"/>
    <property type="evidence" value="ECO:0000314"/>
    <property type="project" value="SGD"/>
</dbReference>
<dbReference type="GO" id="GO:0017116">
    <property type="term" value="F:single-stranded DNA helicase activity"/>
    <property type="evidence" value="ECO:0000314"/>
    <property type="project" value="SGD"/>
</dbReference>
<dbReference type="GO" id="GO:0008270">
    <property type="term" value="F:zinc ion binding"/>
    <property type="evidence" value="ECO:0007669"/>
    <property type="project" value="UniProtKB-KW"/>
</dbReference>
<dbReference type="GO" id="GO:0051276">
    <property type="term" value="P:chromosome organization"/>
    <property type="evidence" value="ECO:0000315"/>
    <property type="project" value="SGD"/>
</dbReference>
<dbReference type="GO" id="GO:0033567">
    <property type="term" value="P:DNA replication, Okazaki fragment processing"/>
    <property type="evidence" value="ECO:0000314"/>
    <property type="project" value="SGD"/>
</dbReference>
<dbReference type="GO" id="GO:0000731">
    <property type="term" value="P:DNA synthesis involved in DNA repair"/>
    <property type="evidence" value="ECO:0000318"/>
    <property type="project" value="GO_Central"/>
</dbReference>
<dbReference type="GO" id="GO:0006261">
    <property type="term" value="P:DNA-templated DNA replication"/>
    <property type="evidence" value="ECO:0000318"/>
    <property type="project" value="GO_Central"/>
</dbReference>
<dbReference type="GO" id="GO:0006282">
    <property type="term" value="P:regulation of DNA repair"/>
    <property type="evidence" value="ECO:0000316"/>
    <property type="project" value="SGD"/>
</dbReference>
<dbReference type="CDD" id="cd00009">
    <property type="entry name" value="AAA"/>
    <property type="match status" value="1"/>
</dbReference>
<dbReference type="CDD" id="cd18139">
    <property type="entry name" value="HLD_clamp_RarA"/>
    <property type="match status" value="1"/>
</dbReference>
<dbReference type="FunFam" id="3.40.50.300:FF:000345">
    <property type="entry name" value="AAA family ATPase"/>
    <property type="match status" value="1"/>
</dbReference>
<dbReference type="FunFam" id="1.10.3710.10:FF:000005">
    <property type="entry name" value="AAA family ATPase, putative"/>
    <property type="match status" value="1"/>
</dbReference>
<dbReference type="FunFam" id="1.20.272.10:FF:000001">
    <property type="entry name" value="Putative AAA family ATPase"/>
    <property type="match status" value="1"/>
</dbReference>
<dbReference type="Gene3D" id="1.10.8.60">
    <property type="match status" value="1"/>
</dbReference>
<dbReference type="Gene3D" id="1.20.272.10">
    <property type="match status" value="1"/>
</dbReference>
<dbReference type="Gene3D" id="1.10.3710.10">
    <property type="entry name" value="DNA polymerase III clamp loader subunits, C-terminal domain"/>
    <property type="match status" value="1"/>
</dbReference>
<dbReference type="Gene3D" id="3.40.50.300">
    <property type="entry name" value="P-loop containing nucleotide triphosphate hydrolases"/>
    <property type="match status" value="1"/>
</dbReference>
<dbReference type="InterPro" id="IPR003593">
    <property type="entry name" value="AAA+_ATPase"/>
</dbReference>
<dbReference type="InterPro" id="IPR032423">
    <property type="entry name" value="AAA_assoc_2"/>
</dbReference>
<dbReference type="InterPro" id="IPR051314">
    <property type="entry name" value="AAA_ATPase_RarA/MGS1/WRNIP1"/>
</dbReference>
<dbReference type="InterPro" id="IPR003959">
    <property type="entry name" value="ATPase_AAA_core"/>
</dbReference>
<dbReference type="InterPro" id="IPR008921">
    <property type="entry name" value="DNA_pol3_clamp-load_cplx_C"/>
</dbReference>
<dbReference type="InterPro" id="IPR021886">
    <property type="entry name" value="MgsA_C"/>
</dbReference>
<dbReference type="InterPro" id="IPR027417">
    <property type="entry name" value="P-loop_NTPase"/>
</dbReference>
<dbReference type="InterPro" id="IPR006642">
    <property type="entry name" value="Rad18_UBZ4"/>
</dbReference>
<dbReference type="PANTHER" id="PTHR13779:SF7">
    <property type="entry name" value="ATPASE WRNIP1"/>
    <property type="match status" value="1"/>
</dbReference>
<dbReference type="PANTHER" id="PTHR13779">
    <property type="entry name" value="WERNER HELICASE-INTERACTING PROTEIN 1 FAMILY MEMBER"/>
    <property type="match status" value="1"/>
</dbReference>
<dbReference type="Pfam" id="PF00004">
    <property type="entry name" value="AAA"/>
    <property type="match status" value="1"/>
</dbReference>
<dbReference type="Pfam" id="PF16193">
    <property type="entry name" value="AAA_assoc_2"/>
    <property type="match status" value="1"/>
</dbReference>
<dbReference type="Pfam" id="PF12002">
    <property type="entry name" value="MgsA_C"/>
    <property type="match status" value="1"/>
</dbReference>
<dbReference type="PRINTS" id="PR00364">
    <property type="entry name" value="DISEASERSIST"/>
</dbReference>
<dbReference type="SMART" id="SM00382">
    <property type="entry name" value="AAA"/>
    <property type="match status" value="1"/>
</dbReference>
<dbReference type="SMART" id="SM00734">
    <property type="entry name" value="ZnF_Rad18"/>
    <property type="match status" value="1"/>
</dbReference>
<dbReference type="SUPFAM" id="SSF52540">
    <property type="entry name" value="P-loop containing nucleoside triphosphate hydrolases"/>
    <property type="match status" value="1"/>
</dbReference>
<dbReference type="SUPFAM" id="SSF48019">
    <property type="entry name" value="post-AAA+ oligomerization domain-like"/>
    <property type="match status" value="1"/>
</dbReference>
<dbReference type="PROSITE" id="PS51908">
    <property type="entry name" value="ZF_UBZ4"/>
    <property type="match status" value="1"/>
</dbReference>
<accession>P40151</accession>
<accession>D6W0X2</accession>
<organism>
    <name type="scientific">Saccharomyces cerevisiae (strain ATCC 204508 / S288c)</name>
    <name type="common">Baker's yeast</name>
    <dbReference type="NCBI Taxonomy" id="559292"/>
    <lineage>
        <taxon>Eukaryota</taxon>
        <taxon>Fungi</taxon>
        <taxon>Dikarya</taxon>
        <taxon>Ascomycota</taxon>
        <taxon>Saccharomycotina</taxon>
        <taxon>Saccharomycetes</taxon>
        <taxon>Saccharomycetales</taxon>
        <taxon>Saccharomycetaceae</taxon>
        <taxon>Saccharomyces</taxon>
    </lineage>
</organism>
<keyword id="KW-0067">ATP-binding</keyword>
<keyword id="KW-0227">DNA damage</keyword>
<keyword id="KW-0234">DNA repair</keyword>
<keyword id="KW-0238">DNA-binding</keyword>
<keyword id="KW-0460">Magnesium</keyword>
<keyword id="KW-0479">Metal-binding</keyword>
<keyword id="KW-0547">Nucleotide-binding</keyword>
<keyword id="KW-0539">Nucleus</keyword>
<keyword id="KW-1185">Reference proteome</keyword>
<keyword id="KW-0862">Zinc</keyword>
<keyword id="KW-0863">Zinc-finger</keyword>